<keyword id="KW-0025">Alternative splicing</keyword>
<keyword id="KW-0106">Calcium</keyword>
<keyword id="KW-0479">Metal-binding</keyword>
<keyword id="KW-1267">Proteomics identification</keyword>
<keyword id="KW-1185">Reference proteome</keyword>
<keyword id="KW-0677">Repeat</keyword>
<evidence type="ECO:0000255" key="1">
    <source>
        <dbReference type="PROSITE-ProRule" id="PRU00448"/>
    </source>
</evidence>
<evidence type="ECO:0000256" key="2">
    <source>
        <dbReference type="SAM" id="MobiDB-lite"/>
    </source>
</evidence>
<evidence type="ECO:0000269" key="3">
    <source>
    </source>
</evidence>
<evidence type="ECO:0000303" key="4">
    <source>
    </source>
</evidence>
<evidence type="ECO:0000303" key="5">
    <source>
    </source>
</evidence>
<evidence type="ECO:0000305" key="6"/>
<evidence type="ECO:0000312" key="7">
    <source>
        <dbReference type="HGNC" id="HGNC:16471"/>
    </source>
</evidence>
<feature type="chain" id="PRO_0000073540" description="Calcyphosin-2">
    <location>
        <begin position="1"/>
        <end position="538"/>
    </location>
</feature>
<feature type="domain" description="EF-hand 1" evidence="1">
    <location>
        <begin position="426"/>
        <end position="461"/>
    </location>
</feature>
<feature type="domain" description="EF-hand 2" evidence="1">
    <location>
        <begin position="462"/>
        <end position="497"/>
    </location>
</feature>
<feature type="domain" description="EF-hand 3" evidence="1">
    <location>
        <begin position="498"/>
        <end position="533"/>
    </location>
</feature>
<feature type="region of interest" description="Disordered" evidence="2">
    <location>
        <begin position="134"/>
        <end position="154"/>
    </location>
</feature>
<feature type="compositionally biased region" description="Polar residues" evidence="2">
    <location>
        <begin position="134"/>
        <end position="146"/>
    </location>
</feature>
<feature type="binding site" evidence="6">
    <location>
        <position position="439"/>
    </location>
    <ligand>
        <name>Ca(2+)</name>
        <dbReference type="ChEBI" id="CHEBI:29108"/>
        <label>1</label>
    </ligand>
</feature>
<feature type="binding site" evidence="6">
    <location>
        <position position="443"/>
    </location>
    <ligand>
        <name>Ca(2+)</name>
        <dbReference type="ChEBI" id="CHEBI:29108"/>
        <label>1</label>
    </ligand>
</feature>
<feature type="binding site" evidence="6">
    <location>
        <position position="450"/>
    </location>
    <ligand>
        <name>Ca(2+)</name>
        <dbReference type="ChEBI" id="CHEBI:29108"/>
        <label>1</label>
    </ligand>
</feature>
<feature type="binding site" evidence="6">
    <location>
        <position position="477"/>
    </location>
    <ligand>
        <name>Ca(2+)</name>
        <dbReference type="ChEBI" id="CHEBI:29108"/>
        <label>2</label>
    </ligand>
</feature>
<feature type="binding site" evidence="6">
    <location>
        <position position="479"/>
    </location>
    <ligand>
        <name>Ca(2+)</name>
        <dbReference type="ChEBI" id="CHEBI:29108"/>
        <label>2</label>
    </ligand>
</feature>
<feature type="binding site" evidence="6">
    <location>
        <position position="481"/>
    </location>
    <ligand>
        <name>Ca(2+)</name>
        <dbReference type="ChEBI" id="CHEBI:29108"/>
        <label>2</label>
    </ligand>
</feature>
<feature type="binding site" evidence="6">
    <location>
        <position position="486"/>
    </location>
    <ligand>
        <name>Ca(2+)</name>
        <dbReference type="ChEBI" id="CHEBI:29108"/>
        <label>2</label>
    </ligand>
</feature>
<feature type="binding site" evidence="6">
    <location>
        <position position="511"/>
    </location>
    <ligand>
        <name>Ca(2+)</name>
        <dbReference type="ChEBI" id="CHEBI:29108"/>
        <label>3</label>
    </ligand>
</feature>
<feature type="binding site" evidence="6">
    <location>
        <position position="513"/>
    </location>
    <ligand>
        <name>Ca(2+)</name>
        <dbReference type="ChEBI" id="CHEBI:29108"/>
        <label>3</label>
    </ligand>
</feature>
<feature type="binding site" evidence="6">
    <location>
        <position position="515"/>
    </location>
    <ligand>
        <name>Ca(2+)</name>
        <dbReference type="ChEBI" id="CHEBI:29108"/>
        <label>3</label>
    </ligand>
</feature>
<feature type="binding site" evidence="6">
    <location>
        <position position="517"/>
    </location>
    <ligand>
        <name>Ca(2+)</name>
        <dbReference type="ChEBI" id="CHEBI:29108"/>
        <label>3</label>
    </ligand>
</feature>
<feature type="binding site" evidence="6">
    <location>
        <position position="522"/>
    </location>
    <ligand>
        <name>Ca(2+)</name>
        <dbReference type="ChEBI" id="CHEBI:29108"/>
        <label>3</label>
    </ligand>
</feature>
<feature type="splice variant" id="VSP_014408" description="In isoform 2 and isoform 3." evidence="4 5">
    <location>
        <begin position="1"/>
        <end position="213"/>
    </location>
</feature>
<feature type="splice variant" id="VSP_062159" description="In isoform 4.">
    <location>
        <begin position="60"/>
        <end position="97"/>
    </location>
</feature>
<feature type="splice variant" id="VSP_014409" description="In isoform 3." evidence="5">
    <location>
        <begin position="285"/>
        <end position="316"/>
    </location>
</feature>
<feature type="splice variant" id="VSP_014410" description="In isoform 2, isoform 4 and isoform 5." evidence="4">
    <original>G</original>
    <variation>GHSTEEEIKSSFLETLKVACSKSDEVSYGEFEDYYEGLSIGIVDDEDFVNILRTPWGI</variation>
    <location>
        <position position="538"/>
    </location>
</feature>
<feature type="sequence variant" id="VAR_061085" description="In dbSNP:rs10879901.">
    <original>L</original>
    <variation>F</variation>
    <location>
        <position position="106"/>
    </location>
</feature>
<feature type="sequence conflict" description="In Ref. 5; AAN76511." evidence="6" ref="5">
    <original>D</original>
    <variation>G</variation>
    <location>
        <position position="167"/>
    </location>
</feature>
<feature type="sequence conflict" description="In Ref. 3; BAC03845." evidence="6" ref="3">
    <original>E</original>
    <variation>G</variation>
    <location>
        <position position="468"/>
    </location>
</feature>
<comment type="alternative products">
    <event type="alternative splicing"/>
    <isoform>
        <id>Q9BXY5-1</id>
        <name>1</name>
        <sequence type="displayed"/>
    </isoform>
    <isoform>
        <id>Q9BXY5-2</id>
        <name>2</name>
        <sequence type="described" ref="VSP_014408 VSP_014410"/>
    </isoform>
    <isoform>
        <id>Q9BXY5-3</id>
        <name>3</name>
        <sequence type="described" ref="VSP_014408 VSP_014409"/>
    </isoform>
    <isoform>
        <id>Q9BXY5-4</id>
        <name>4</name>
        <sequence type="described" ref="VSP_062159 VSP_014410"/>
    </isoform>
    <isoform>
        <id>Q9BXY5-5</id>
        <name>5</name>
        <sequence type="described" ref="VSP_014410"/>
    </isoform>
</comment>
<comment type="tissue specificity">
    <text evidence="3">Abundantly expressed in many tissues. Expressed in brain, colon, heart, kidney, liver, lung, liver, pancreas, placenta, skeletal muscle, testis and thymus. Highest expression in colon, testis, lung, placenta and brain.</text>
</comment>
<comment type="sequence caution" evidence="6">
    <conflict type="erroneous initiation">
        <sequence resource="EMBL-CDS" id="AAN76511"/>
    </conflict>
    <text>Truncated N-terminus.</text>
</comment>
<comment type="sequence caution" evidence="6">
    <conflict type="erroneous initiation">
        <sequence resource="EMBL-CDS" id="BAC03759"/>
    </conflict>
    <text>Extended N-terminus.</text>
</comment>
<comment type="sequence caution" evidence="6">
    <conflict type="erroneous initiation">
        <sequence resource="EMBL-CDS" id="BAC03845"/>
    </conflict>
    <text>Truncated N-terminus.</text>
</comment>
<dbReference type="EMBL" id="AF251056">
    <property type="protein sequence ID" value="AAK34946.1"/>
    <property type="molecule type" value="mRNA"/>
</dbReference>
<dbReference type="EMBL" id="AC091534">
    <property type="status" value="NOT_ANNOTATED_CDS"/>
    <property type="molecule type" value="Genomic_DNA"/>
</dbReference>
<dbReference type="EMBL" id="AC092552">
    <property type="status" value="NOT_ANNOTATED_CDS"/>
    <property type="molecule type" value="Genomic_DNA"/>
</dbReference>
<dbReference type="EMBL" id="AC121761">
    <property type="status" value="NOT_ANNOTATED_CDS"/>
    <property type="molecule type" value="Genomic_DNA"/>
</dbReference>
<dbReference type="EMBL" id="AK091839">
    <property type="protein sequence ID" value="BAC03759.1"/>
    <property type="status" value="ALT_INIT"/>
    <property type="molecule type" value="mRNA"/>
</dbReference>
<dbReference type="EMBL" id="AK092274">
    <property type="protein sequence ID" value="BAC03845.1"/>
    <property type="status" value="ALT_INIT"/>
    <property type="molecule type" value="mRNA"/>
</dbReference>
<dbReference type="EMBL" id="BC056672">
    <property type="protein sequence ID" value="AAH56672.1"/>
    <property type="molecule type" value="mRNA"/>
</dbReference>
<dbReference type="EMBL" id="AF351611">
    <property type="protein sequence ID" value="AAN76511.1"/>
    <property type="status" value="ALT_INIT"/>
    <property type="molecule type" value="mRNA"/>
</dbReference>
<dbReference type="CCDS" id="CCDS91727.1">
    <molecule id="Q9BXY5-4"/>
</dbReference>
<dbReference type="PIR" id="JC7811">
    <property type="entry name" value="JC7811"/>
</dbReference>
<dbReference type="RefSeq" id="NP_001273477.1">
    <molecule id="Q9BXY5-2"/>
    <property type="nucleotide sequence ID" value="NM_001286548.3"/>
</dbReference>
<dbReference type="RefSeq" id="NP_001341953.2">
    <molecule id="Q9BXY5-4"/>
    <property type="nucleotide sequence ID" value="NM_001355024.4"/>
</dbReference>
<dbReference type="RefSeq" id="NP_001341959.1">
    <molecule id="Q9BXY5-2"/>
    <property type="nucleotide sequence ID" value="NM_001355030.2"/>
</dbReference>
<dbReference type="RefSeq" id="NP_001341960.1">
    <molecule id="Q9BXY5-2"/>
    <property type="nucleotide sequence ID" value="NM_001355031.2"/>
</dbReference>
<dbReference type="RefSeq" id="NP_001341961.1">
    <molecule id="Q9BXY5-2"/>
    <property type="nucleotide sequence ID" value="NM_001355032.2"/>
</dbReference>
<dbReference type="RefSeq" id="NP_001341962.1">
    <molecule id="Q9BXY5-2"/>
    <property type="nucleotide sequence ID" value="NM_001355033.2"/>
</dbReference>
<dbReference type="RefSeq" id="NP_115995.2">
    <property type="nucleotide sequence ID" value="NM_032606.3"/>
</dbReference>
<dbReference type="RefSeq" id="XP_005269251.1">
    <property type="nucleotide sequence ID" value="XM_005269194.3"/>
</dbReference>
<dbReference type="RefSeq" id="XP_011537194.1">
    <property type="nucleotide sequence ID" value="XM_011538892.1"/>
</dbReference>
<dbReference type="RefSeq" id="XP_016875525.1">
    <property type="nucleotide sequence ID" value="XM_017020036.1"/>
</dbReference>
<dbReference type="RefSeq" id="XP_016875526.1">
    <property type="nucleotide sequence ID" value="XM_017020037.1"/>
</dbReference>
<dbReference type="RefSeq" id="XP_016875527.1">
    <property type="nucleotide sequence ID" value="XM_017020038.1"/>
</dbReference>
<dbReference type="RefSeq" id="XP_047285687.1">
    <molecule id="Q9BXY5-2"/>
    <property type="nucleotide sequence ID" value="XM_047429731.1"/>
</dbReference>
<dbReference type="RefSeq" id="XP_054229536.1">
    <molecule id="Q9BXY5-2"/>
    <property type="nucleotide sequence ID" value="XM_054373561.1"/>
</dbReference>
<dbReference type="FunCoup" id="Q9BXY5">
    <property type="interactions" value="52"/>
</dbReference>
<dbReference type="STRING" id="9606.ENSP00000386959"/>
<dbReference type="iPTMnet" id="Q9BXY5"/>
<dbReference type="PhosphoSitePlus" id="Q9BXY5"/>
<dbReference type="BioMuta" id="CAPS2"/>
<dbReference type="DMDM" id="68840161"/>
<dbReference type="jPOST" id="Q9BXY5"/>
<dbReference type="MassIVE" id="Q9BXY5"/>
<dbReference type="PaxDb" id="9606-ENSP00000386959"/>
<dbReference type="PeptideAtlas" id="Q9BXY5"/>
<dbReference type="ProteomicsDB" id="79542">
    <molecule id="Q9BXY5-1"/>
</dbReference>
<dbReference type="ProteomicsDB" id="79543">
    <molecule id="Q9BXY5-2"/>
</dbReference>
<dbReference type="ProteomicsDB" id="79544">
    <molecule id="Q9BXY5-3"/>
</dbReference>
<dbReference type="Antibodypedia" id="29581">
    <property type="antibodies" value="107 antibodies from 22 providers"/>
</dbReference>
<dbReference type="DNASU" id="84698"/>
<dbReference type="Ensembl" id="ENST00000393284.8">
    <molecule id="Q9BXY5-5"/>
    <property type="protein sequence ID" value="ENSP00000376963.4"/>
    <property type="gene ID" value="ENSG00000180881.21"/>
</dbReference>
<dbReference type="Ensembl" id="ENST00000409445.8">
    <molecule id="Q9BXY5-1"/>
    <property type="protein sequence ID" value="ENSP00000386959.4"/>
    <property type="gene ID" value="ENSG00000180881.21"/>
</dbReference>
<dbReference type="Ensembl" id="ENST00000699294.1">
    <molecule id="Q9BXY5-4"/>
    <property type="protein sequence ID" value="ENSP00000514274.1"/>
    <property type="gene ID" value="ENSG00000180881.21"/>
</dbReference>
<dbReference type="GeneID" id="84698"/>
<dbReference type="KEGG" id="hsa:84698"/>
<dbReference type="MANE-Select" id="ENST00000699294.1">
    <molecule id="Q9BXY5-4"/>
    <property type="protein sequence ID" value="ENSP00000514274.1"/>
    <property type="RefSeq nucleotide sequence ID" value="NM_001355024.4"/>
    <property type="RefSeq protein sequence ID" value="NP_001341953.2"/>
</dbReference>
<dbReference type="UCSC" id="uc001sxk.4">
    <molecule id="Q9BXY5-1"/>
    <property type="organism name" value="human"/>
</dbReference>
<dbReference type="AGR" id="HGNC:16471"/>
<dbReference type="CTD" id="84698"/>
<dbReference type="DisGeNET" id="84698"/>
<dbReference type="GeneCards" id="CAPS2"/>
<dbReference type="HGNC" id="HGNC:16471">
    <property type="gene designation" value="CAPS2"/>
</dbReference>
<dbReference type="HPA" id="ENSG00000180881">
    <property type="expression patterns" value="Tissue enhanced (retina)"/>
</dbReference>
<dbReference type="MIM" id="607724">
    <property type="type" value="gene"/>
</dbReference>
<dbReference type="neXtProt" id="NX_Q9BXY5"/>
<dbReference type="OpenTargets" id="ENSG00000180881"/>
<dbReference type="PharmGKB" id="PA38405"/>
<dbReference type="VEuPathDB" id="HostDB:ENSG00000180881"/>
<dbReference type="eggNOG" id="KOG0032">
    <property type="taxonomic scope" value="Eukaryota"/>
</dbReference>
<dbReference type="GeneTree" id="ENSGT00940000159670"/>
<dbReference type="HOGENOM" id="CLU_036726_3_0_1"/>
<dbReference type="InParanoid" id="Q9BXY5"/>
<dbReference type="OrthoDB" id="6280085at2759"/>
<dbReference type="PAN-GO" id="Q9BXY5">
    <property type="GO annotations" value="0 GO annotations based on evolutionary models"/>
</dbReference>
<dbReference type="PhylomeDB" id="Q9BXY5"/>
<dbReference type="TreeFam" id="TF323924"/>
<dbReference type="PathwayCommons" id="Q9BXY5"/>
<dbReference type="BioGRID-ORCS" id="84698">
    <property type="hits" value="10 hits in 1131 CRISPR screens"/>
</dbReference>
<dbReference type="ChiTaRS" id="CAPS2">
    <property type="organism name" value="human"/>
</dbReference>
<dbReference type="GenomeRNAi" id="84698"/>
<dbReference type="Pharos" id="Q9BXY5">
    <property type="development level" value="Tdark"/>
</dbReference>
<dbReference type="PRO" id="PR:Q9BXY5"/>
<dbReference type="Proteomes" id="UP000005640">
    <property type="component" value="Chromosome 12"/>
</dbReference>
<dbReference type="RNAct" id="Q9BXY5">
    <property type="molecule type" value="protein"/>
</dbReference>
<dbReference type="Bgee" id="ENSG00000180881">
    <property type="expression patterns" value="Expressed in bronchial epithelial cell and 149 other cell types or tissues"/>
</dbReference>
<dbReference type="ExpressionAtlas" id="Q9BXY5">
    <property type="expression patterns" value="baseline and differential"/>
</dbReference>
<dbReference type="GO" id="GO:0005509">
    <property type="term" value="F:calcium ion binding"/>
    <property type="evidence" value="ECO:0007669"/>
    <property type="project" value="InterPro"/>
</dbReference>
<dbReference type="CDD" id="cd00051">
    <property type="entry name" value="EFh"/>
    <property type="match status" value="1"/>
</dbReference>
<dbReference type="Gene3D" id="1.10.238.10">
    <property type="entry name" value="EF-hand"/>
    <property type="match status" value="2"/>
</dbReference>
<dbReference type="InterPro" id="IPR051581">
    <property type="entry name" value="Ca-bind_SignalingProt"/>
</dbReference>
<dbReference type="InterPro" id="IPR011992">
    <property type="entry name" value="EF-hand-dom_pair"/>
</dbReference>
<dbReference type="InterPro" id="IPR002048">
    <property type="entry name" value="EF_hand_dom"/>
</dbReference>
<dbReference type="PANTHER" id="PTHR34524">
    <property type="entry name" value="CALCYPHOSIN"/>
    <property type="match status" value="1"/>
</dbReference>
<dbReference type="PANTHER" id="PTHR34524:SF3">
    <property type="entry name" value="CALCYPHOSIN-2"/>
    <property type="match status" value="1"/>
</dbReference>
<dbReference type="Pfam" id="PF13499">
    <property type="entry name" value="EF-hand_7"/>
    <property type="match status" value="1"/>
</dbReference>
<dbReference type="Pfam" id="PF25348">
    <property type="entry name" value="PH_CAYP2"/>
    <property type="match status" value="1"/>
</dbReference>
<dbReference type="SMART" id="SM00054">
    <property type="entry name" value="EFh"/>
    <property type="match status" value="2"/>
</dbReference>
<dbReference type="SUPFAM" id="SSF47473">
    <property type="entry name" value="EF-hand"/>
    <property type="match status" value="1"/>
</dbReference>
<dbReference type="PROSITE" id="PS50222">
    <property type="entry name" value="EF_HAND_2"/>
    <property type="match status" value="3"/>
</dbReference>
<sequence>MDLEVKGVAATSRSQIQPFFGRKKPLQQRWTSESWTNQNSCPPVVPRLDLGSLVDSDDEDNFSYIPLSTANLPNSSSTLGWVTPCQTPYTQYHLNKLDQNIIPENLPAPTDKCKLKYQQCKTEIKEGYKQYSQRNAENTKSNVTHKQSPRNKIDEKCVQDEEANTDDLTTLDRKAILQQGYADNSCDKQQRARKLDAEIVAAEKKKQIVAEQVMIDHLSRAVISDPEQNLAIEQKESDHILPDSKMTPLRFRKRTLHETKIRTHSTLTENVLSHKLQFDGRIVSRNGRDACRELIGFFFTHDQSLTIYEYRQFGKNRTNVLPFIQKSIYSHQCGRRKGKQYRLGDFYVGATLTFLSSDHLSLPESIKENTLLKLRITNIDQIALDSLKTASMEQEDDIIIQETNDRLVFKAIQDVLKEKLHKRGVRILTGLGKYFQQLDKEGNGLLDKADFKQALKVFHLEVSEKDFESAWLILNDNGNGKVDYGEFKRGIIGEMNEYRKSYVRKAFMKLDFNKSGSVPIINIRKCYCAKKHSQVISG</sequence>
<protein>
    <recommendedName>
        <fullName evidence="6">Calcyphosin-2</fullName>
    </recommendedName>
    <alternativeName>
        <fullName>Calcyphosine-2</fullName>
    </alternativeName>
</protein>
<organism>
    <name type="scientific">Homo sapiens</name>
    <name type="common">Human</name>
    <dbReference type="NCBI Taxonomy" id="9606"/>
    <lineage>
        <taxon>Eukaryota</taxon>
        <taxon>Metazoa</taxon>
        <taxon>Chordata</taxon>
        <taxon>Craniata</taxon>
        <taxon>Vertebrata</taxon>
        <taxon>Euteleostomi</taxon>
        <taxon>Mammalia</taxon>
        <taxon>Eutheria</taxon>
        <taxon>Euarchontoglires</taxon>
        <taxon>Primates</taxon>
        <taxon>Haplorrhini</taxon>
        <taxon>Catarrhini</taxon>
        <taxon>Hominidae</taxon>
        <taxon>Homo</taxon>
    </lineage>
</organism>
<reference key="1">
    <citation type="journal article" date="2002" name="Biochem. Biophys. Res. Commun.">
        <title>Cloning, characterization, and expression of calcyphosine 2, a novel human gene encoding an EF-hand Ca(2+)-binding protein.</title>
        <authorList>
            <person name="Wang S."/>
            <person name="Chen J.-Z."/>
            <person name="Zhang Z."/>
            <person name="Huang Q."/>
            <person name="Gu S."/>
            <person name="Ying K."/>
            <person name="Xie Y."/>
            <person name="Mao Y."/>
        </authorList>
    </citation>
    <scope>NUCLEOTIDE SEQUENCE [MRNA] (ISOFORM 2)</scope>
    <scope>TISSUE SPECIFICITY</scope>
</reference>
<reference key="2">
    <citation type="journal article" date="2006" name="Nature">
        <title>The finished DNA sequence of human chromosome 12.</title>
        <authorList>
            <person name="Scherer S.E."/>
            <person name="Muzny D.M."/>
            <person name="Buhay C.J."/>
            <person name="Chen R."/>
            <person name="Cree A."/>
            <person name="Ding Y."/>
            <person name="Dugan-Rocha S."/>
            <person name="Gill R."/>
            <person name="Gunaratne P."/>
            <person name="Harris R.A."/>
            <person name="Hawes A.C."/>
            <person name="Hernandez J."/>
            <person name="Hodgson A.V."/>
            <person name="Hume J."/>
            <person name="Jackson A."/>
            <person name="Khan Z.M."/>
            <person name="Kovar-Smith C."/>
            <person name="Lewis L.R."/>
            <person name="Lozado R.J."/>
            <person name="Metzker M.L."/>
            <person name="Milosavljevic A."/>
            <person name="Miner G.R."/>
            <person name="Montgomery K.T."/>
            <person name="Morgan M.B."/>
            <person name="Nazareth L.V."/>
            <person name="Scott G."/>
            <person name="Sodergren E."/>
            <person name="Song X.-Z."/>
            <person name="Steffen D."/>
            <person name="Lovering R.C."/>
            <person name="Wheeler D.A."/>
            <person name="Worley K.C."/>
            <person name="Yuan Y."/>
            <person name="Zhang Z."/>
            <person name="Adams C.Q."/>
            <person name="Ansari-Lari M.A."/>
            <person name="Ayele M."/>
            <person name="Brown M.J."/>
            <person name="Chen G."/>
            <person name="Chen Z."/>
            <person name="Clerc-Blankenburg K.P."/>
            <person name="Davis C."/>
            <person name="Delgado O."/>
            <person name="Dinh H.H."/>
            <person name="Draper H."/>
            <person name="Gonzalez-Garay M.L."/>
            <person name="Havlak P."/>
            <person name="Jackson L.R."/>
            <person name="Jacob L.S."/>
            <person name="Kelly S.H."/>
            <person name="Li L."/>
            <person name="Li Z."/>
            <person name="Liu J."/>
            <person name="Liu W."/>
            <person name="Lu J."/>
            <person name="Maheshwari M."/>
            <person name="Nguyen B.-V."/>
            <person name="Okwuonu G.O."/>
            <person name="Pasternak S."/>
            <person name="Perez L.M."/>
            <person name="Plopper F.J.H."/>
            <person name="Santibanez J."/>
            <person name="Shen H."/>
            <person name="Tabor P.E."/>
            <person name="Verduzco D."/>
            <person name="Waldron L."/>
            <person name="Wang Q."/>
            <person name="Williams G.A."/>
            <person name="Zhang J."/>
            <person name="Zhou J."/>
            <person name="Allen C.C."/>
            <person name="Amin A.G."/>
            <person name="Anyalebechi V."/>
            <person name="Bailey M."/>
            <person name="Barbaria J.A."/>
            <person name="Bimage K.E."/>
            <person name="Bryant N.P."/>
            <person name="Burch P.E."/>
            <person name="Burkett C.E."/>
            <person name="Burrell K.L."/>
            <person name="Calderon E."/>
            <person name="Cardenas V."/>
            <person name="Carter K."/>
            <person name="Casias K."/>
            <person name="Cavazos I."/>
            <person name="Cavazos S.R."/>
            <person name="Ceasar H."/>
            <person name="Chacko J."/>
            <person name="Chan S.N."/>
            <person name="Chavez D."/>
            <person name="Christopoulos C."/>
            <person name="Chu J."/>
            <person name="Cockrell R."/>
            <person name="Cox C.D."/>
            <person name="Dang M."/>
            <person name="Dathorne S.R."/>
            <person name="David R."/>
            <person name="Davis C.M."/>
            <person name="Davy-Carroll L."/>
            <person name="Deshazo D.R."/>
            <person name="Donlin J.E."/>
            <person name="D'Souza L."/>
            <person name="Eaves K.A."/>
            <person name="Egan A."/>
            <person name="Emery-Cohen A.J."/>
            <person name="Escotto M."/>
            <person name="Flagg N."/>
            <person name="Forbes L.D."/>
            <person name="Gabisi A.M."/>
            <person name="Garza M."/>
            <person name="Hamilton C."/>
            <person name="Henderson N."/>
            <person name="Hernandez O."/>
            <person name="Hines S."/>
            <person name="Hogues M.E."/>
            <person name="Huang M."/>
            <person name="Idlebird D.G."/>
            <person name="Johnson R."/>
            <person name="Jolivet A."/>
            <person name="Jones S."/>
            <person name="Kagan R."/>
            <person name="King L.M."/>
            <person name="Leal B."/>
            <person name="Lebow H."/>
            <person name="Lee S."/>
            <person name="LeVan J.M."/>
            <person name="Lewis L.C."/>
            <person name="London P."/>
            <person name="Lorensuhewa L.M."/>
            <person name="Loulseged H."/>
            <person name="Lovett D.A."/>
            <person name="Lucier A."/>
            <person name="Lucier R.L."/>
            <person name="Ma J."/>
            <person name="Madu R.C."/>
            <person name="Mapua P."/>
            <person name="Martindale A.D."/>
            <person name="Martinez E."/>
            <person name="Massey E."/>
            <person name="Mawhiney S."/>
            <person name="Meador M.G."/>
            <person name="Mendez S."/>
            <person name="Mercado C."/>
            <person name="Mercado I.C."/>
            <person name="Merritt C.E."/>
            <person name="Miner Z.L."/>
            <person name="Minja E."/>
            <person name="Mitchell T."/>
            <person name="Mohabbat F."/>
            <person name="Mohabbat K."/>
            <person name="Montgomery B."/>
            <person name="Moore N."/>
            <person name="Morris S."/>
            <person name="Munidasa M."/>
            <person name="Ngo R.N."/>
            <person name="Nguyen N.B."/>
            <person name="Nickerson E."/>
            <person name="Nwaokelemeh O.O."/>
            <person name="Nwokenkwo S."/>
            <person name="Obregon M."/>
            <person name="Oguh M."/>
            <person name="Oragunye N."/>
            <person name="Oviedo R.J."/>
            <person name="Parish B.J."/>
            <person name="Parker D.N."/>
            <person name="Parrish J."/>
            <person name="Parks K.L."/>
            <person name="Paul H.A."/>
            <person name="Payton B.A."/>
            <person name="Perez A."/>
            <person name="Perrin W."/>
            <person name="Pickens A."/>
            <person name="Primus E.L."/>
            <person name="Pu L.-L."/>
            <person name="Puazo M."/>
            <person name="Quiles M.M."/>
            <person name="Quiroz J.B."/>
            <person name="Rabata D."/>
            <person name="Reeves K."/>
            <person name="Ruiz S.J."/>
            <person name="Shao H."/>
            <person name="Sisson I."/>
            <person name="Sonaike T."/>
            <person name="Sorelle R.P."/>
            <person name="Sutton A.E."/>
            <person name="Svatek A.F."/>
            <person name="Svetz L.A."/>
            <person name="Tamerisa K.S."/>
            <person name="Taylor T.R."/>
            <person name="Teague B."/>
            <person name="Thomas N."/>
            <person name="Thorn R.D."/>
            <person name="Trejos Z.Y."/>
            <person name="Trevino B.K."/>
            <person name="Ukegbu O.N."/>
            <person name="Urban J.B."/>
            <person name="Vasquez L.I."/>
            <person name="Vera V.A."/>
            <person name="Villasana D.M."/>
            <person name="Wang L."/>
            <person name="Ward-Moore S."/>
            <person name="Warren J.T."/>
            <person name="Wei X."/>
            <person name="White F."/>
            <person name="Williamson A.L."/>
            <person name="Wleczyk R."/>
            <person name="Wooden H.S."/>
            <person name="Wooden S.H."/>
            <person name="Yen J."/>
            <person name="Yoon L."/>
            <person name="Yoon V."/>
            <person name="Zorrilla S.E."/>
            <person name="Nelson D."/>
            <person name="Kucherlapati R."/>
            <person name="Weinstock G."/>
            <person name="Gibbs R.A."/>
        </authorList>
    </citation>
    <scope>NUCLEOTIDE SEQUENCE [LARGE SCALE GENOMIC DNA]</scope>
</reference>
<reference key="3">
    <citation type="journal article" date="2004" name="Nat. Genet.">
        <title>Complete sequencing and characterization of 21,243 full-length human cDNAs.</title>
        <authorList>
            <person name="Ota T."/>
            <person name="Suzuki Y."/>
            <person name="Nishikawa T."/>
            <person name="Otsuki T."/>
            <person name="Sugiyama T."/>
            <person name="Irie R."/>
            <person name="Wakamatsu A."/>
            <person name="Hayashi K."/>
            <person name="Sato H."/>
            <person name="Nagai K."/>
            <person name="Kimura K."/>
            <person name="Makita H."/>
            <person name="Sekine M."/>
            <person name="Obayashi M."/>
            <person name="Nishi T."/>
            <person name="Shibahara T."/>
            <person name="Tanaka T."/>
            <person name="Ishii S."/>
            <person name="Yamamoto J."/>
            <person name="Saito K."/>
            <person name="Kawai Y."/>
            <person name="Isono Y."/>
            <person name="Nakamura Y."/>
            <person name="Nagahari K."/>
            <person name="Murakami K."/>
            <person name="Yasuda T."/>
            <person name="Iwayanagi T."/>
            <person name="Wagatsuma M."/>
            <person name="Shiratori A."/>
            <person name="Sudo H."/>
            <person name="Hosoiri T."/>
            <person name="Kaku Y."/>
            <person name="Kodaira H."/>
            <person name="Kondo H."/>
            <person name="Sugawara M."/>
            <person name="Takahashi M."/>
            <person name="Kanda K."/>
            <person name="Yokoi T."/>
            <person name="Furuya T."/>
            <person name="Kikkawa E."/>
            <person name="Omura Y."/>
            <person name="Abe K."/>
            <person name="Kamihara K."/>
            <person name="Katsuta N."/>
            <person name="Sato K."/>
            <person name="Tanikawa M."/>
            <person name="Yamazaki M."/>
            <person name="Ninomiya K."/>
            <person name="Ishibashi T."/>
            <person name="Yamashita H."/>
            <person name="Murakawa K."/>
            <person name="Fujimori K."/>
            <person name="Tanai H."/>
            <person name="Kimata M."/>
            <person name="Watanabe M."/>
            <person name="Hiraoka S."/>
            <person name="Chiba Y."/>
            <person name="Ishida S."/>
            <person name="Ono Y."/>
            <person name="Takiguchi S."/>
            <person name="Watanabe S."/>
            <person name="Yosida M."/>
            <person name="Hotuta T."/>
            <person name="Kusano J."/>
            <person name="Kanehori K."/>
            <person name="Takahashi-Fujii A."/>
            <person name="Hara H."/>
            <person name="Tanase T.-O."/>
            <person name="Nomura Y."/>
            <person name="Togiya S."/>
            <person name="Komai F."/>
            <person name="Hara R."/>
            <person name="Takeuchi K."/>
            <person name="Arita M."/>
            <person name="Imose N."/>
            <person name="Musashino K."/>
            <person name="Yuuki H."/>
            <person name="Oshima A."/>
            <person name="Sasaki N."/>
            <person name="Aotsuka S."/>
            <person name="Yoshikawa Y."/>
            <person name="Matsunawa H."/>
            <person name="Ichihara T."/>
            <person name="Shiohata N."/>
            <person name="Sano S."/>
            <person name="Moriya S."/>
            <person name="Momiyama H."/>
            <person name="Satoh N."/>
            <person name="Takami S."/>
            <person name="Terashima Y."/>
            <person name="Suzuki O."/>
            <person name="Nakagawa S."/>
            <person name="Senoh A."/>
            <person name="Mizoguchi H."/>
            <person name="Goto Y."/>
            <person name="Shimizu F."/>
            <person name="Wakebe H."/>
            <person name="Hishigaki H."/>
            <person name="Watanabe T."/>
            <person name="Sugiyama A."/>
            <person name="Takemoto M."/>
            <person name="Kawakami B."/>
            <person name="Yamazaki M."/>
            <person name="Watanabe K."/>
            <person name="Kumagai A."/>
            <person name="Itakura S."/>
            <person name="Fukuzumi Y."/>
            <person name="Fujimori Y."/>
            <person name="Komiyama M."/>
            <person name="Tashiro H."/>
            <person name="Tanigami A."/>
            <person name="Fujiwara T."/>
            <person name="Ono T."/>
            <person name="Yamada K."/>
            <person name="Fujii Y."/>
            <person name="Ozaki K."/>
            <person name="Hirao M."/>
            <person name="Ohmori Y."/>
            <person name="Kawabata A."/>
            <person name="Hikiji T."/>
            <person name="Kobatake N."/>
            <person name="Inagaki H."/>
            <person name="Ikema Y."/>
            <person name="Okamoto S."/>
            <person name="Okitani R."/>
            <person name="Kawakami T."/>
            <person name="Noguchi S."/>
            <person name="Itoh T."/>
            <person name="Shigeta K."/>
            <person name="Senba T."/>
            <person name="Matsumura K."/>
            <person name="Nakajima Y."/>
            <person name="Mizuno T."/>
            <person name="Morinaga M."/>
            <person name="Sasaki M."/>
            <person name="Togashi T."/>
            <person name="Oyama M."/>
            <person name="Hata H."/>
            <person name="Watanabe M."/>
            <person name="Komatsu T."/>
            <person name="Mizushima-Sugano J."/>
            <person name="Satoh T."/>
            <person name="Shirai Y."/>
            <person name="Takahashi Y."/>
            <person name="Nakagawa K."/>
            <person name="Okumura K."/>
            <person name="Nagase T."/>
            <person name="Nomura N."/>
            <person name="Kikuchi H."/>
            <person name="Masuho Y."/>
            <person name="Yamashita R."/>
            <person name="Nakai K."/>
            <person name="Yada T."/>
            <person name="Nakamura Y."/>
            <person name="Ohara O."/>
            <person name="Isogai T."/>
            <person name="Sugano S."/>
        </authorList>
    </citation>
    <scope>NUCLEOTIDE SEQUENCE [LARGE SCALE MRNA] (ISOFORM 1)</scope>
    <scope>NUCLEOTIDE SEQUENCE [LARGE SCALE MRNA] OF 178-538 (ISOFORMS 1/2/5)</scope>
    <source>
        <tissue>Tongue</tissue>
    </source>
</reference>
<reference key="4">
    <citation type="journal article" date="2004" name="Genome Res.">
        <title>The status, quality, and expansion of the NIH full-length cDNA project: the Mammalian Gene Collection (MGC).</title>
        <authorList>
            <consortium name="The MGC Project Team"/>
        </authorList>
    </citation>
    <scope>NUCLEOTIDE SEQUENCE [LARGE SCALE MRNA] (ISOFORM 3)</scope>
    <source>
        <tissue>Testis</tissue>
    </source>
</reference>
<reference key="5">
    <citation type="submission" date="2001-02" db="EMBL/GenBank/DDBJ databases">
        <title>Isolation of full-length cDNA clones from human fetal brain cDNA library.</title>
        <authorList>
            <person name="Mao Y."/>
            <person name="Xie Y."/>
        </authorList>
    </citation>
    <scope>NUCLEOTIDE SEQUENCE [LARGE SCALE MRNA] OF 14-538 (ISOFORMS 1/2)</scope>
    <source>
        <tissue>Fetal brain</tissue>
    </source>
</reference>
<gene>
    <name evidence="7" type="primary">CAPS2</name>
    <name type="ORF">UG0636c06</name>
</gene>
<name>CAYP2_HUMAN</name>
<accession>Q9BXY5</accession>
<accession>A0A8V8TPT3</accession>
<accession>Q6PH84</accession>
<accession>Q8N242</accession>
<accession>Q8NAY5</accession>
<proteinExistence type="evidence at protein level"/>